<name>KC12_ENCCU</name>
<evidence type="ECO:0000250" key="1"/>
<evidence type="ECO:0000255" key="2">
    <source>
        <dbReference type="PROSITE-ProRule" id="PRU00159"/>
    </source>
</evidence>
<evidence type="ECO:0000305" key="3"/>
<keyword id="KW-0067">ATP-binding</keyword>
<keyword id="KW-0227">DNA damage</keyword>
<keyword id="KW-0234">DNA repair</keyword>
<keyword id="KW-0418">Kinase</keyword>
<keyword id="KW-0547">Nucleotide-binding</keyword>
<keyword id="KW-0539">Nucleus</keyword>
<keyword id="KW-1185">Reference proteome</keyword>
<keyword id="KW-0723">Serine/threonine-protein kinase</keyword>
<keyword id="KW-0808">Transferase</keyword>
<comment type="function">
    <text evidence="1">Involved in DNA repair. May regulate the activity of protein(s) involved in double strand break repair caused by gamma rays (By similarity).</text>
</comment>
<comment type="catalytic activity">
    <reaction>
        <text>L-seryl-[protein] + ATP = O-phospho-L-seryl-[protein] + ADP + H(+)</text>
        <dbReference type="Rhea" id="RHEA:17989"/>
        <dbReference type="Rhea" id="RHEA-COMP:9863"/>
        <dbReference type="Rhea" id="RHEA-COMP:11604"/>
        <dbReference type="ChEBI" id="CHEBI:15378"/>
        <dbReference type="ChEBI" id="CHEBI:29999"/>
        <dbReference type="ChEBI" id="CHEBI:30616"/>
        <dbReference type="ChEBI" id="CHEBI:83421"/>
        <dbReference type="ChEBI" id="CHEBI:456216"/>
        <dbReference type="EC" id="2.7.11.1"/>
    </reaction>
</comment>
<comment type="catalytic activity">
    <reaction>
        <text>L-threonyl-[protein] + ATP = O-phospho-L-threonyl-[protein] + ADP + H(+)</text>
        <dbReference type="Rhea" id="RHEA:46608"/>
        <dbReference type="Rhea" id="RHEA-COMP:11060"/>
        <dbReference type="Rhea" id="RHEA-COMP:11605"/>
        <dbReference type="ChEBI" id="CHEBI:15378"/>
        <dbReference type="ChEBI" id="CHEBI:30013"/>
        <dbReference type="ChEBI" id="CHEBI:30616"/>
        <dbReference type="ChEBI" id="CHEBI:61977"/>
        <dbReference type="ChEBI" id="CHEBI:456216"/>
        <dbReference type="EC" id="2.7.11.1"/>
    </reaction>
</comment>
<comment type="subcellular location">
    <subcellularLocation>
        <location evidence="3">Nucleus</location>
    </subcellularLocation>
</comment>
<comment type="similarity">
    <text evidence="3">Belongs to the protein kinase superfamily. CK1 Ser/Thr protein kinase family. Casein kinase I subfamily.</text>
</comment>
<protein>
    <recommendedName>
        <fullName>Probable casein kinase I homolog ECU11_1980</fullName>
        <ecNumber>2.7.11.1</ecNumber>
    </recommendedName>
</protein>
<gene>
    <name type="ordered locus">ECU11_1980</name>
</gene>
<feature type="chain" id="PRO_0000384417" description="Probable casein kinase I homolog ECU11_1980">
    <location>
        <begin position="1"/>
        <end position="318"/>
    </location>
</feature>
<feature type="domain" description="Protein kinase" evidence="2">
    <location>
        <begin position="8"/>
        <end position="276"/>
    </location>
</feature>
<feature type="active site" description="Proton acceptor" evidence="2">
    <location>
        <position position="129"/>
    </location>
</feature>
<feature type="binding site" evidence="2">
    <location>
        <begin position="14"/>
        <end position="22"/>
    </location>
    <ligand>
        <name>ATP</name>
        <dbReference type="ChEBI" id="CHEBI:30616"/>
    </ligand>
</feature>
<feature type="binding site" evidence="2">
    <location>
        <position position="37"/>
    </location>
    <ligand>
        <name>ATP</name>
        <dbReference type="ChEBI" id="CHEBI:30616"/>
    </ligand>
</feature>
<dbReference type="EC" id="2.7.11.1"/>
<dbReference type="EMBL" id="AL590450">
    <property type="protein sequence ID" value="CAD26108.1"/>
    <property type="molecule type" value="Genomic_DNA"/>
</dbReference>
<dbReference type="RefSeq" id="NP_586504.1">
    <property type="nucleotide sequence ID" value="NM_001042337.1"/>
</dbReference>
<dbReference type="SMR" id="Q8SQR2"/>
<dbReference type="STRING" id="284813.Q8SQR2"/>
<dbReference type="GeneID" id="860158"/>
<dbReference type="KEGG" id="ecu:ECU11_1980"/>
<dbReference type="VEuPathDB" id="MicrosporidiaDB:ECU11_1980"/>
<dbReference type="HOGENOM" id="CLU_019279_2_0_1"/>
<dbReference type="InParanoid" id="Q8SQR2"/>
<dbReference type="OMA" id="MSINTHR"/>
<dbReference type="OrthoDB" id="5800476at2759"/>
<dbReference type="Proteomes" id="UP000000819">
    <property type="component" value="Chromosome XI"/>
</dbReference>
<dbReference type="GO" id="GO:0005634">
    <property type="term" value="C:nucleus"/>
    <property type="evidence" value="ECO:0007669"/>
    <property type="project" value="UniProtKB-SubCell"/>
</dbReference>
<dbReference type="GO" id="GO:0005524">
    <property type="term" value="F:ATP binding"/>
    <property type="evidence" value="ECO:0007669"/>
    <property type="project" value="UniProtKB-KW"/>
</dbReference>
<dbReference type="GO" id="GO:0106310">
    <property type="term" value="F:protein serine kinase activity"/>
    <property type="evidence" value="ECO:0007669"/>
    <property type="project" value="RHEA"/>
</dbReference>
<dbReference type="GO" id="GO:0004674">
    <property type="term" value="F:protein serine/threonine kinase activity"/>
    <property type="evidence" value="ECO:0007669"/>
    <property type="project" value="UniProtKB-KW"/>
</dbReference>
<dbReference type="GO" id="GO:0006281">
    <property type="term" value="P:DNA repair"/>
    <property type="evidence" value="ECO:0007669"/>
    <property type="project" value="UniProtKB-KW"/>
</dbReference>
<dbReference type="Gene3D" id="1.10.510.10">
    <property type="entry name" value="Transferase(Phosphotransferase) domain 1"/>
    <property type="match status" value="1"/>
</dbReference>
<dbReference type="InterPro" id="IPR050235">
    <property type="entry name" value="CK1_Ser-Thr_kinase"/>
</dbReference>
<dbReference type="InterPro" id="IPR011009">
    <property type="entry name" value="Kinase-like_dom_sf"/>
</dbReference>
<dbReference type="InterPro" id="IPR000719">
    <property type="entry name" value="Prot_kinase_dom"/>
</dbReference>
<dbReference type="InterPro" id="IPR017441">
    <property type="entry name" value="Protein_kinase_ATP_BS"/>
</dbReference>
<dbReference type="PANTHER" id="PTHR11909">
    <property type="entry name" value="CASEIN KINASE-RELATED"/>
    <property type="match status" value="1"/>
</dbReference>
<dbReference type="Pfam" id="PF00069">
    <property type="entry name" value="Pkinase"/>
    <property type="match status" value="1"/>
</dbReference>
<dbReference type="SMART" id="SM00220">
    <property type="entry name" value="S_TKc"/>
    <property type="match status" value="1"/>
</dbReference>
<dbReference type="SUPFAM" id="SSF56112">
    <property type="entry name" value="Protein kinase-like (PK-like)"/>
    <property type="match status" value="1"/>
</dbReference>
<dbReference type="PROSITE" id="PS00107">
    <property type="entry name" value="PROTEIN_KINASE_ATP"/>
    <property type="match status" value="1"/>
</dbReference>
<dbReference type="PROSITE" id="PS50011">
    <property type="entry name" value="PROTEIN_KINASE_DOM"/>
    <property type="match status" value="1"/>
</dbReference>
<organism>
    <name type="scientific">Encephalitozoon cuniculi (strain GB-M1)</name>
    <name type="common">Microsporidian parasite</name>
    <dbReference type="NCBI Taxonomy" id="284813"/>
    <lineage>
        <taxon>Eukaryota</taxon>
        <taxon>Fungi</taxon>
        <taxon>Fungi incertae sedis</taxon>
        <taxon>Microsporidia</taxon>
        <taxon>Unikaryonidae</taxon>
        <taxon>Encephalitozoon</taxon>
    </lineage>
</organism>
<proteinExistence type="inferred from homology"/>
<reference key="1">
    <citation type="journal article" date="2001" name="Nature">
        <title>Genome sequence and gene compaction of the eukaryote parasite Encephalitozoon cuniculi.</title>
        <authorList>
            <person name="Katinka M.D."/>
            <person name="Duprat S."/>
            <person name="Cornillot E."/>
            <person name="Metenier G."/>
            <person name="Thomarat F."/>
            <person name="Prensier G."/>
            <person name="Barbe V."/>
            <person name="Peyretaillade E."/>
            <person name="Brottier P."/>
            <person name="Wincker P."/>
            <person name="Delbac F."/>
            <person name="El Alaoui H."/>
            <person name="Peyret P."/>
            <person name="Saurin W."/>
            <person name="Gouy M."/>
            <person name="Weissenbach J."/>
            <person name="Vivares C.P."/>
        </authorList>
    </citation>
    <scope>NUCLEOTIDE SEQUENCE [LARGE SCALE GENOMIC DNA]</scope>
    <source>
        <strain>GB-M1</strain>
    </source>
</reference>
<reference key="2">
    <citation type="journal article" date="2007" name="BMC Genomics">
        <title>The complement of protein kinases of the microsporidium Encephalitozoon cuniculi in relation to those of Saccharomyces cerevisiae and Schizosaccharomyces pombe.</title>
        <authorList>
            <person name="Miranda-Saavedra D."/>
            <person name="Stark M.J.R."/>
            <person name="Packer J.C."/>
            <person name="Vivares C.P."/>
            <person name="Doerig C."/>
            <person name="Barton G.J."/>
        </authorList>
    </citation>
    <scope>PREDICTION OF FUNCTION</scope>
</reference>
<sequence length="318" mass="36589">MRGEIMDYTICREIGKGGFGKVYEVKKKADQKSYALKIETNAPKAGRNSIINEIQAYSELQGCEKIPRLVDHGSYEGLTFLVLPLLKYSLKDLLERHPRFFTKKSATIVGKKLLNAIEFIHGKGRLHRDIKPENVMFGHNNRIYLVDFGMSAPYLRGDGSHIPEVGGKSVSGTLWYMSINTHRGIEQSRRDDLESLFYLLILLYKSRLPWMEPGASVSKKQEARTKEIKENLSVYDLCDGIHGKEHLIKFFQHISSLEFAEKPNYRYLNSLLDKIFHSNKELQGYKRAPKKEDTGLIRTSLWHKFISILSPFEVKYDG</sequence>
<accession>Q8SQR2</accession>